<sequence>MATITPQKGSQSEVGVSNTDPLNWGNAVESLKGSHLEEVKGMVAEYREAVIHVGGGETLTVSKVAAVANQYLQAKVDLSESAREGVDSSCKWIVDNIDKGIPIYGVTTGFGANSNRQTQEGLALQKEMVRFLNCAIFGYQTELSHTLPKSATRAAMLVRVNTLLQGYSGIRFEILEAITKLLNHNVTPILPLRGTITASGDLIPLSYIAALLIGRRNSKAVGPSGESLNAKEAFHLAGVDGGFFELKPKEGLALVNGTAVGSGVASMVLFEANILALLAEVLSAVFAEVMQGKPEFTDHLIHKLKYHPGQIEAAAIMEHILDGSSYVKNAKLQQPDPLQKPRKDRYALVTSPQWLGPQIEIIRFSTKSIEREINSVNDNPLIDVTRNKAVSGGNFQGTPIGVSMDNARLAVASIGKLIFAQFTELANDLYNNGLPSNLSVGRNPSLDYGFKASEVAMAAYCSELQYLANPVTSHVQSTEQHNQDVNSLGLISALKTVEAIEILKLMSSTYLVALCQAIDLRHLEEIFKNTVKNTVSRVALKTLTTEDKEETNPFRFSEEELLKVVDREYVFSYIDDPLNVRYPLMPKLKQVLYEQAHTSVINDKNVSLLVFEKIGAFEDELKSLLPKEVESARVAYENGNPATPNRIKECRSYPLYKFVREELGIRLLTGEKALSPDEEFEKVYTAMCQAKIIDPILECLEDWNGVPIPI</sequence>
<feature type="chain" id="PRO_0000215411" description="Phenylalanine ammonia-lyase class 3">
    <location>
        <begin position="1"/>
        <end position="710"/>
    </location>
</feature>
<feature type="region of interest" description="Disordered" evidence="5">
    <location>
        <begin position="1"/>
        <end position="21"/>
    </location>
</feature>
<feature type="active site" description="Proton donor/acceptor" evidence="3">
    <location>
        <position position="104"/>
    </location>
</feature>
<feature type="binding site" evidence="3">
    <location>
        <position position="256"/>
    </location>
    <ligand>
        <name>(E)-cinnamate</name>
        <dbReference type="ChEBI" id="CHEBI:15669"/>
    </ligand>
</feature>
<feature type="binding site" evidence="3">
    <location>
        <position position="379"/>
    </location>
    <ligand>
        <name>(E)-cinnamate</name>
        <dbReference type="ChEBI" id="CHEBI:15669"/>
    </ligand>
</feature>
<feature type="binding site" evidence="1">
    <location>
        <position position="451"/>
    </location>
    <ligand>
        <name>(E)-cinnamate</name>
        <dbReference type="ChEBI" id="CHEBI:15669"/>
    </ligand>
</feature>
<feature type="binding site" evidence="1">
    <location>
        <position position="479"/>
    </location>
    <ligand>
        <name>(E)-cinnamate</name>
        <dbReference type="ChEBI" id="CHEBI:15669"/>
    </ligand>
</feature>
<feature type="binding site" evidence="3">
    <location>
        <position position="482"/>
    </location>
    <ligand>
        <name>(E)-cinnamate</name>
        <dbReference type="ChEBI" id="CHEBI:15669"/>
    </ligand>
</feature>
<feature type="modified residue" description="2,3-didehydroalanine (Ser)" evidence="4">
    <location>
        <position position="199"/>
    </location>
</feature>
<feature type="cross-link" description="5-imidazolinone (Ala-Gly)" evidence="3">
    <location>
        <begin position="198"/>
        <end position="200"/>
    </location>
</feature>
<keyword id="KW-0963">Cytoplasm</keyword>
<keyword id="KW-0456">Lyase</keyword>
<keyword id="KW-0585">Phenylalanine catabolism</keyword>
<keyword id="KW-0587">Phenylpropanoid metabolism</keyword>
<evidence type="ECO:0000250" key="1">
    <source>
        <dbReference type="UniProtKB" id="P11544"/>
    </source>
</evidence>
<evidence type="ECO:0000250" key="2">
    <source>
        <dbReference type="UniProtKB" id="P24481"/>
    </source>
</evidence>
<evidence type="ECO:0000250" key="3">
    <source>
        <dbReference type="UniProtKB" id="Q68G84"/>
    </source>
</evidence>
<evidence type="ECO:0000255" key="4">
    <source>
        <dbReference type="PROSITE-ProRule" id="PRU10122"/>
    </source>
</evidence>
<evidence type="ECO:0000256" key="5">
    <source>
        <dbReference type="SAM" id="MobiDB-lite"/>
    </source>
</evidence>
<evidence type="ECO:0000305" key="6"/>
<dbReference type="EC" id="4.3.1.24" evidence="2"/>
<dbReference type="PIR" id="S04128">
    <property type="entry name" value="S04128"/>
</dbReference>
<dbReference type="RefSeq" id="XP_007142542.1">
    <property type="nucleotide sequence ID" value="XM_007142480.1"/>
</dbReference>
<dbReference type="RefSeq" id="XP_068487376.1">
    <property type="nucleotide sequence ID" value="XM_068631275.1"/>
</dbReference>
<dbReference type="SMR" id="P19143"/>
<dbReference type="EnsemblPlants" id="ESW14536">
    <property type="protein sequence ID" value="ESW14536"/>
    <property type="gene ID" value="PHAVU_008G289500g"/>
</dbReference>
<dbReference type="GeneID" id="137825574"/>
<dbReference type="Gramene" id="ESW14536">
    <property type="protein sequence ID" value="ESW14536"/>
    <property type="gene ID" value="PHAVU_008G289500g"/>
</dbReference>
<dbReference type="eggNOG" id="KOG0222">
    <property type="taxonomic scope" value="Eukaryota"/>
</dbReference>
<dbReference type="OMA" id="MVRFLNC"/>
<dbReference type="OrthoDB" id="10051290at2759"/>
<dbReference type="UniPathway" id="UPA00713">
    <property type="reaction ID" value="UER00725"/>
</dbReference>
<dbReference type="GO" id="GO:0005737">
    <property type="term" value="C:cytoplasm"/>
    <property type="evidence" value="ECO:0007669"/>
    <property type="project" value="UniProtKB-SubCell"/>
</dbReference>
<dbReference type="GO" id="GO:0045548">
    <property type="term" value="F:phenylalanine ammonia-lyase activity"/>
    <property type="evidence" value="ECO:0007669"/>
    <property type="project" value="UniProtKB-EC"/>
</dbReference>
<dbReference type="GO" id="GO:0009800">
    <property type="term" value="P:cinnamic acid biosynthetic process"/>
    <property type="evidence" value="ECO:0007669"/>
    <property type="project" value="UniProtKB-UniPathway"/>
</dbReference>
<dbReference type="GO" id="GO:0006559">
    <property type="term" value="P:L-phenylalanine catabolic process"/>
    <property type="evidence" value="ECO:0007669"/>
    <property type="project" value="UniProtKB-KW"/>
</dbReference>
<dbReference type="CDD" id="cd00332">
    <property type="entry name" value="PAL-HAL"/>
    <property type="match status" value="1"/>
</dbReference>
<dbReference type="FunFam" id="1.10.275.10:FF:000009">
    <property type="entry name" value="Phenylalanine ammonia-lyase"/>
    <property type="match status" value="1"/>
</dbReference>
<dbReference type="Gene3D" id="1.20.200.10">
    <property type="entry name" value="Fumarase/aspartase (Central domain)"/>
    <property type="match status" value="1"/>
</dbReference>
<dbReference type="Gene3D" id="1.10.275.10">
    <property type="entry name" value="Fumarase/aspartase (N-terminal domain)"/>
    <property type="match status" value="1"/>
</dbReference>
<dbReference type="Gene3D" id="1.10.274.20">
    <property type="entry name" value="Phenylalanine ammonia-lyase 1, domain 3"/>
    <property type="match status" value="1"/>
</dbReference>
<dbReference type="InterPro" id="IPR001106">
    <property type="entry name" value="Aromatic_Lyase"/>
</dbReference>
<dbReference type="InterPro" id="IPR024083">
    <property type="entry name" value="Fumarase/histidase_N"/>
</dbReference>
<dbReference type="InterPro" id="IPR008948">
    <property type="entry name" value="L-Aspartase-like"/>
</dbReference>
<dbReference type="InterPro" id="IPR022313">
    <property type="entry name" value="Phe/His_NH3-lyase_AS"/>
</dbReference>
<dbReference type="InterPro" id="IPR005922">
    <property type="entry name" value="Phe_NH3-lyase"/>
</dbReference>
<dbReference type="InterPro" id="IPR023144">
    <property type="entry name" value="Phe_NH3-lyase_shielding_dom_sf"/>
</dbReference>
<dbReference type="NCBIfam" id="TIGR01226">
    <property type="entry name" value="phe_am_lyase"/>
    <property type="match status" value="1"/>
</dbReference>
<dbReference type="PANTHER" id="PTHR10362">
    <property type="entry name" value="HISTIDINE AMMONIA-LYASE"/>
    <property type="match status" value="1"/>
</dbReference>
<dbReference type="Pfam" id="PF00221">
    <property type="entry name" value="Lyase_aromatic"/>
    <property type="match status" value="1"/>
</dbReference>
<dbReference type="SUPFAM" id="SSF48557">
    <property type="entry name" value="L-aspartase-like"/>
    <property type="match status" value="1"/>
</dbReference>
<dbReference type="PROSITE" id="PS00488">
    <property type="entry name" value="PAL_HISTIDASE"/>
    <property type="match status" value="1"/>
</dbReference>
<proteinExistence type="inferred from homology"/>
<organism>
    <name type="scientific">Phaseolus vulgaris</name>
    <name type="common">Kidney bean</name>
    <name type="synonym">French bean</name>
    <dbReference type="NCBI Taxonomy" id="3885"/>
    <lineage>
        <taxon>Eukaryota</taxon>
        <taxon>Viridiplantae</taxon>
        <taxon>Streptophyta</taxon>
        <taxon>Embryophyta</taxon>
        <taxon>Tracheophyta</taxon>
        <taxon>Spermatophyta</taxon>
        <taxon>Magnoliopsida</taxon>
        <taxon>eudicotyledons</taxon>
        <taxon>Gunneridae</taxon>
        <taxon>Pentapetalae</taxon>
        <taxon>rosids</taxon>
        <taxon>fabids</taxon>
        <taxon>Fabales</taxon>
        <taxon>Fabaceae</taxon>
        <taxon>Papilionoideae</taxon>
        <taxon>50 kb inversion clade</taxon>
        <taxon>NPAAA clade</taxon>
        <taxon>indigoferoid/millettioid clade</taxon>
        <taxon>Phaseoleae</taxon>
        <taxon>Phaseolus</taxon>
    </lineage>
</organism>
<name>PAL3_PHAVU</name>
<reference key="1">
    <citation type="journal article" date="1989" name="Plant Mol. Biol.">
        <title>Phenylalanine ammonia-lyase gene organisation and structure.</title>
        <authorList>
            <person name="Cramer C.L."/>
            <person name="Edwards K."/>
            <person name="Dron M."/>
            <person name="Liang X."/>
            <person name="Dildine S.L."/>
            <person name="Bolwell G.P."/>
            <person name="Dixon R.A."/>
            <person name="Lamb C.J."/>
            <person name="Schuch W."/>
        </authorList>
    </citation>
    <scope>NUCLEOTIDE SEQUENCE</scope>
</reference>
<comment type="function">
    <text evidence="2">This is a key enzyme of plant metabolism catalyzing the first reaction in the biosynthesis from L-phenylalanine of a wide variety of natural products based on the phenylpropane skeleton.</text>
</comment>
<comment type="catalytic activity">
    <reaction evidence="2">
        <text>L-phenylalanine = (E)-cinnamate + NH4(+)</text>
        <dbReference type="Rhea" id="RHEA:21384"/>
        <dbReference type="ChEBI" id="CHEBI:15669"/>
        <dbReference type="ChEBI" id="CHEBI:28938"/>
        <dbReference type="ChEBI" id="CHEBI:58095"/>
        <dbReference type="EC" id="4.3.1.24"/>
    </reaction>
</comment>
<comment type="pathway">
    <text evidence="6">Phenylpropanoid metabolism; trans-cinnamate biosynthesis; trans-cinnamate from L-phenylalanine: step 1/1.</text>
</comment>
<comment type="subunit">
    <text evidence="2">Homotetramer.</text>
</comment>
<comment type="subcellular location">
    <subcellularLocation>
        <location evidence="6">Cytoplasm</location>
    </subcellularLocation>
</comment>
<comment type="PTM">
    <text evidence="3">Contains an active site 4-methylidene-imidazol-5-one (MIO), which is formed autocatalytically by cyclization and dehydration of residues Ala-Ser-Gly.</text>
</comment>
<comment type="similarity">
    <text evidence="6">Belongs to the PAL/histidase family.</text>
</comment>
<accession>P19143</accession>
<protein>
    <recommendedName>
        <fullName>Phenylalanine ammonia-lyase class 3</fullName>
        <ecNumber evidence="2">4.3.1.24</ecNumber>
    </recommendedName>
    <alternativeName>
        <fullName>Phenylalanine ammonia-lyase class III</fullName>
    </alternativeName>
</protein>